<gene>
    <name evidence="1" type="primary">ligA</name>
    <name type="ordered locus">Rmag_0280</name>
</gene>
<sequence length="614" mass="68938">MDELSDEELAQFCQIANLAYRAGKPIISDQDYDFIYLDALKNRDPDNLLFKFIETEGQSFSEEKVLLPEAMLSIDKAYSWDEISKWIKRLEKSAMQISLDLSAIQIKATPKLDGFSGFDDGSRLYTRGDGKKGSDISRVFERGLCVFNDAERGLGAGEIVIKKSYFKKYLAHSFEYPRNFQASLIKEKALDEQAQKAIIDKAALFIPFIKLPTWSGLVAELVAKFDQIVAQVLVMVDFDVDGVVFEAINTDLKTQMGANRKFHRWQIAFKENKDKAHVKVLNVIPQVGRSGKITPVVELEPTLLSGATIMRATGHNYGLVKEQGLGVGSVVELTRSGLVIPKIIFVLKPMPVDIPDNCPSCDKPLVWKSDFLTCINHKNCPAQIIGKMAYFFKILANNDGFGIATIEKLYAHDIRSVSQIYALNIEDLVTIGFGEKTSMNLINQLNRSVSEQVEDWRFLAAFGMHRMGLGNCENLLKSHHLNDIFDLNLKEIANIDGFAELTGQIIVQGLISIADEFNHIYQYGFNLETTILTKDLQTLTHELFDKKIVFTGKMNHSRDDMKKHAKSIGIKVSTSISAKIDYLVIGDKVGQKKIKDAEKFGVVVMTETDYLSKI</sequence>
<reference key="1">
    <citation type="journal article" date="2007" name="Science">
        <title>The Calyptogena magnifica chemoautotrophic symbiont genome.</title>
        <authorList>
            <person name="Newton I.L.G."/>
            <person name="Woyke T."/>
            <person name="Auchtung T.A."/>
            <person name="Dilly G.F."/>
            <person name="Dutton R.J."/>
            <person name="Fisher M.C."/>
            <person name="Fontanez K.M."/>
            <person name="Lau E."/>
            <person name="Stewart F.J."/>
            <person name="Richardson P.M."/>
            <person name="Barry K.W."/>
            <person name="Saunders E."/>
            <person name="Detter J.C."/>
            <person name="Wu D."/>
            <person name="Eisen J.A."/>
            <person name="Cavanaugh C.M."/>
        </authorList>
    </citation>
    <scope>NUCLEOTIDE SEQUENCE [LARGE SCALE GENOMIC DNA]</scope>
</reference>
<feature type="chain" id="PRO_0000313414" description="DNA ligase">
    <location>
        <begin position="1"/>
        <end position="614"/>
    </location>
</feature>
<feature type="domain" description="BRCT" evidence="1">
    <location>
        <begin position="538"/>
        <end position="614"/>
    </location>
</feature>
<feature type="active site" description="N6-AMP-lysine intermediate" evidence="1">
    <location>
        <position position="111"/>
    </location>
</feature>
<feature type="binding site" evidence="1">
    <location>
        <begin position="29"/>
        <end position="33"/>
    </location>
    <ligand>
        <name>NAD(+)</name>
        <dbReference type="ChEBI" id="CHEBI:57540"/>
    </ligand>
</feature>
<feature type="binding site" evidence="1">
    <location>
        <begin position="73"/>
        <end position="74"/>
    </location>
    <ligand>
        <name>NAD(+)</name>
        <dbReference type="ChEBI" id="CHEBI:57540"/>
    </ligand>
</feature>
<feature type="binding site" evidence="1">
    <location>
        <position position="127"/>
    </location>
    <ligand>
        <name>NAD(+)</name>
        <dbReference type="ChEBI" id="CHEBI:57540"/>
    </ligand>
</feature>
<feature type="binding site" evidence="1">
    <location>
        <position position="158"/>
    </location>
    <ligand>
        <name>NAD(+)</name>
        <dbReference type="ChEBI" id="CHEBI:57540"/>
    </ligand>
</feature>
<feature type="binding site" evidence="1">
    <location>
        <position position="270"/>
    </location>
    <ligand>
        <name>NAD(+)</name>
        <dbReference type="ChEBI" id="CHEBI:57540"/>
    </ligand>
</feature>
<feature type="binding site" evidence="1">
    <location>
        <position position="358"/>
    </location>
    <ligand>
        <name>Zn(2+)</name>
        <dbReference type="ChEBI" id="CHEBI:29105"/>
    </ligand>
</feature>
<feature type="binding site" evidence="1">
    <location>
        <position position="361"/>
    </location>
    <ligand>
        <name>Zn(2+)</name>
        <dbReference type="ChEBI" id="CHEBI:29105"/>
    </ligand>
</feature>
<feature type="binding site" evidence="1">
    <location>
        <position position="374"/>
    </location>
    <ligand>
        <name>Zn(2+)</name>
        <dbReference type="ChEBI" id="CHEBI:29105"/>
    </ligand>
</feature>
<feature type="binding site" evidence="1">
    <location>
        <position position="380"/>
    </location>
    <ligand>
        <name>Zn(2+)</name>
        <dbReference type="ChEBI" id="CHEBI:29105"/>
    </ligand>
</feature>
<protein>
    <recommendedName>
        <fullName evidence="1">DNA ligase</fullName>
        <ecNumber evidence="1">6.5.1.2</ecNumber>
    </recommendedName>
    <alternativeName>
        <fullName evidence="1">Polydeoxyribonucleotide synthase [NAD(+)]</fullName>
    </alternativeName>
</protein>
<accession>A1AVV5</accession>
<name>DNLJ_RUTMC</name>
<comment type="function">
    <text evidence="1">DNA ligase that catalyzes the formation of phosphodiester linkages between 5'-phosphoryl and 3'-hydroxyl groups in double-stranded DNA using NAD as a coenzyme and as the energy source for the reaction. It is essential for DNA replication and repair of damaged DNA.</text>
</comment>
<comment type="catalytic activity">
    <reaction evidence="1">
        <text>NAD(+) + (deoxyribonucleotide)n-3'-hydroxyl + 5'-phospho-(deoxyribonucleotide)m = (deoxyribonucleotide)n+m + AMP + beta-nicotinamide D-nucleotide.</text>
        <dbReference type="EC" id="6.5.1.2"/>
    </reaction>
</comment>
<comment type="cofactor">
    <cofactor evidence="1">
        <name>Mg(2+)</name>
        <dbReference type="ChEBI" id="CHEBI:18420"/>
    </cofactor>
    <cofactor evidence="1">
        <name>Mn(2+)</name>
        <dbReference type="ChEBI" id="CHEBI:29035"/>
    </cofactor>
</comment>
<comment type="similarity">
    <text evidence="1">Belongs to the NAD-dependent DNA ligase family. LigA subfamily.</text>
</comment>
<dbReference type="EC" id="6.5.1.2" evidence="1"/>
<dbReference type="EMBL" id="CP000488">
    <property type="protein sequence ID" value="ABL02062.1"/>
    <property type="molecule type" value="Genomic_DNA"/>
</dbReference>
<dbReference type="RefSeq" id="WP_011737687.1">
    <property type="nucleotide sequence ID" value="NC_008610.1"/>
</dbReference>
<dbReference type="SMR" id="A1AVV5"/>
<dbReference type="STRING" id="413404.Rmag_0280"/>
<dbReference type="KEGG" id="rma:Rmag_0280"/>
<dbReference type="eggNOG" id="COG0272">
    <property type="taxonomic scope" value="Bacteria"/>
</dbReference>
<dbReference type="HOGENOM" id="CLU_007764_2_0_6"/>
<dbReference type="OrthoDB" id="9759736at2"/>
<dbReference type="Proteomes" id="UP000002587">
    <property type="component" value="Chromosome"/>
</dbReference>
<dbReference type="GO" id="GO:0003911">
    <property type="term" value="F:DNA ligase (NAD+) activity"/>
    <property type="evidence" value="ECO:0007669"/>
    <property type="project" value="UniProtKB-UniRule"/>
</dbReference>
<dbReference type="GO" id="GO:0046872">
    <property type="term" value="F:metal ion binding"/>
    <property type="evidence" value="ECO:0007669"/>
    <property type="project" value="UniProtKB-KW"/>
</dbReference>
<dbReference type="GO" id="GO:0006281">
    <property type="term" value="P:DNA repair"/>
    <property type="evidence" value="ECO:0007669"/>
    <property type="project" value="UniProtKB-KW"/>
</dbReference>
<dbReference type="GO" id="GO:0006260">
    <property type="term" value="P:DNA replication"/>
    <property type="evidence" value="ECO:0007669"/>
    <property type="project" value="UniProtKB-KW"/>
</dbReference>
<dbReference type="CDD" id="cd17748">
    <property type="entry name" value="BRCT_DNA_ligase_like"/>
    <property type="match status" value="1"/>
</dbReference>
<dbReference type="Gene3D" id="3.30.1490.70">
    <property type="match status" value="1"/>
</dbReference>
<dbReference type="Gene3D" id="1.10.150.20">
    <property type="entry name" value="5' to 3' exonuclease, C-terminal subdomain"/>
    <property type="match status" value="1"/>
</dbReference>
<dbReference type="Gene3D" id="3.40.50.10190">
    <property type="entry name" value="BRCT domain"/>
    <property type="match status" value="1"/>
</dbReference>
<dbReference type="Gene3D" id="3.30.470.30">
    <property type="entry name" value="DNA ligase/mRNA capping enzyme"/>
    <property type="match status" value="1"/>
</dbReference>
<dbReference type="Gene3D" id="2.40.50.140">
    <property type="entry name" value="Nucleic acid-binding proteins"/>
    <property type="match status" value="1"/>
</dbReference>
<dbReference type="HAMAP" id="MF_01588">
    <property type="entry name" value="DNA_ligase_A"/>
    <property type="match status" value="1"/>
</dbReference>
<dbReference type="InterPro" id="IPR001357">
    <property type="entry name" value="BRCT_dom"/>
</dbReference>
<dbReference type="InterPro" id="IPR036420">
    <property type="entry name" value="BRCT_dom_sf"/>
</dbReference>
<dbReference type="InterPro" id="IPR001679">
    <property type="entry name" value="DNA_ligase"/>
</dbReference>
<dbReference type="InterPro" id="IPR013839">
    <property type="entry name" value="DNAligase_adenylation"/>
</dbReference>
<dbReference type="InterPro" id="IPR013840">
    <property type="entry name" value="DNAligase_N"/>
</dbReference>
<dbReference type="InterPro" id="IPR012340">
    <property type="entry name" value="NA-bd_OB-fold"/>
</dbReference>
<dbReference type="InterPro" id="IPR004150">
    <property type="entry name" value="NAD_DNA_ligase_OB"/>
</dbReference>
<dbReference type="InterPro" id="IPR010994">
    <property type="entry name" value="RuvA_2-like"/>
</dbReference>
<dbReference type="Pfam" id="PF00533">
    <property type="entry name" value="BRCT"/>
    <property type="match status" value="1"/>
</dbReference>
<dbReference type="Pfam" id="PF01653">
    <property type="entry name" value="DNA_ligase_aden"/>
    <property type="match status" value="1"/>
</dbReference>
<dbReference type="Pfam" id="PF03120">
    <property type="entry name" value="DNA_ligase_OB"/>
    <property type="match status" value="1"/>
</dbReference>
<dbReference type="PIRSF" id="PIRSF001604">
    <property type="entry name" value="LigA"/>
    <property type="match status" value="1"/>
</dbReference>
<dbReference type="SMART" id="SM00532">
    <property type="entry name" value="LIGANc"/>
    <property type="match status" value="1"/>
</dbReference>
<dbReference type="SUPFAM" id="SSF52113">
    <property type="entry name" value="BRCT domain"/>
    <property type="match status" value="1"/>
</dbReference>
<dbReference type="SUPFAM" id="SSF56091">
    <property type="entry name" value="DNA ligase/mRNA capping enzyme, catalytic domain"/>
    <property type="match status" value="1"/>
</dbReference>
<dbReference type="SUPFAM" id="SSF50249">
    <property type="entry name" value="Nucleic acid-binding proteins"/>
    <property type="match status" value="1"/>
</dbReference>
<dbReference type="SUPFAM" id="SSF47781">
    <property type="entry name" value="RuvA domain 2-like"/>
    <property type="match status" value="1"/>
</dbReference>
<organism>
    <name type="scientific">Ruthia magnifica subsp. Calyptogena magnifica</name>
    <dbReference type="NCBI Taxonomy" id="413404"/>
    <lineage>
        <taxon>Bacteria</taxon>
        <taxon>Pseudomonadati</taxon>
        <taxon>Pseudomonadota</taxon>
        <taxon>Gammaproteobacteria</taxon>
        <taxon>Candidatus Pseudothioglobaceae</taxon>
        <taxon>Candidatus Ruthturnera</taxon>
    </lineage>
</organism>
<evidence type="ECO:0000255" key="1">
    <source>
        <dbReference type="HAMAP-Rule" id="MF_01588"/>
    </source>
</evidence>
<proteinExistence type="inferred from homology"/>
<keyword id="KW-0227">DNA damage</keyword>
<keyword id="KW-0234">DNA repair</keyword>
<keyword id="KW-0235">DNA replication</keyword>
<keyword id="KW-0436">Ligase</keyword>
<keyword id="KW-0460">Magnesium</keyword>
<keyword id="KW-0464">Manganese</keyword>
<keyword id="KW-0479">Metal-binding</keyword>
<keyword id="KW-0520">NAD</keyword>
<keyword id="KW-0862">Zinc</keyword>